<dbReference type="EMBL" id="CP000764">
    <property type="protein sequence ID" value="ABS20486.1"/>
    <property type="molecule type" value="Genomic_DNA"/>
</dbReference>
<dbReference type="RefSeq" id="WP_000855718.1">
    <property type="nucleotide sequence ID" value="NC_009674.1"/>
</dbReference>
<dbReference type="SMR" id="A7GK28"/>
<dbReference type="STRING" id="315749.Bcer98_0112"/>
<dbReference type="GeneID" id="93010935"/>
<dbReference type="KEGG" id="bcy:Bcer98_0112"/>
<dbReference type="eggNOG" id="COG0255">
    <property type="taxonomic scope" value="Bacteria"/>
</dbReference>
<dbReference type="HOGENOM" id="CLU_158491_5_2_9"/>
<dbReference type="OrthoDB" id="9815192at2"/>
<dbReference type="Proteomes" id="UP000002300">
    <property type="component" value="Chromosome"/>
</dbReference>
<dbReference type="GO" id="GO:0022625">
    <property type="term" value="C:cytosolic large ribosomal subunit"/>
    <property type="evidence" value="ECO:0007669"/>
    <property type="project" value="TreeGrafter"/>
</dbReference>
<dbReference type="GO" id="GO:0003735">
    <property type="term" value="F:structural constituent of ribosome"/>
    <property type="evidence" value="ECO:0007669"/>
    <property type="project" value="InterPro"/>
</dbReference>
<dbReference type="GO" id="GO:0006412">
    <property type="term" value="P:translation"/>
    <property type="evidence" value="ECO:0007669"/>
    <property type="project" value="UniProtKB-UniRule"/>
</dbReference>
<dbReference type="CDD" id="cd00427">
    <property type="entry name" value="Ribosomal_L29_HIP"/>
    <property type="match status" value="1"/>
</dbReference>
<dbReference type="FunFam" id="1.10.287.310:FF:000001">
    <property type="entry name" value="50S ribosomal protein L29"/>
    <property type="match status" value="1"/>
</dbReference>
<dbReference type="Gene3D" id="1.10.287.310">
    <property type="match status" value="1"/>
</dbReference>
<dbReference type="HAMAP" id="MF_00374">
    <property type="entry name" value="Ribosomal_uL29"/>
    <property type="match status" value="1"/>
</dbReference>
<dbReference type="InterPro" id="IPR050063">
    <property type="entry name" value="Ribosomal_protein_uL29"/>
</dbReference>
<dbReference type="InterPro" id="IPR001854">
    <property type="entry name" value="Ribosomal_uL29"/>
</dbReference>
<dbReference type="InterPro" id="IPR018254">
    <property type="entry name" value="Ribosomal_uL29_CS"/>
</dbReference>
<dbReference type="InterPro" id="IPR036049">
    <property type="entry name" value="Ribosomal_uL29_sf"/>
</dbReference>
<dbReference type="NCBIfam" id="TIGR00012">
    <property type="entry name" value="L29"/>
    <property type="match status" value="1"/>
</dbReference>
<dbReference type="PANTHER" id="PTHR10916">
    <property type="entry name" value="60S RIBOSOMAL PROTEIN L35/50S RIBOSOMAL PROTEIN L29"/>
    <property type="match status" value="1"/>
</dbReference>
<dbReference type="PANTHER" id="PTHR10916:SF0">
    <property type="entry name" value="LARGE RIBOSOMAL SUBUNIT PROTEIN UL29C"/>
    <property type="match status" value="1"/>
</dbReference>
<dbReference type="Pfam" id="PF00831">
    <property type="entry name" value="Ribosomal_L29"/>
    <property type="match status" value="1"/>
</dbReference>
<dbReference type="SUPFAM" id="SSF46561">
    <property type="entry name" value="Ribosomal protein L29 (L29p)"/>
    <property type="match status" value="1"/>
</dbReference>
<dbReference type="PROSITE" id="PS00579">
    <property type="entry name" value="RIBOSOMAL_L29"/>
    <property type="match status" value="1"/>
</dbReference>
<sequence>MKTNDIRELTTAEIETKVKALKEELFNLRFQLATGQLENPTRIREVRKAIARMKTVVREREIGINR</sequence>
<gene>
    <name evidence="1" type="primary">rpmC</name>
    <name type="ordered locus">Bcer98_0112</name>
</gene>
<evidence type="ECO:0000255" key="1">
    <source>
        <dbReference type="HAMAP-Rule" id="MF_00374"/>
    </source>
</evidence>
<evidence type="ECO:0000305" key="2"/>
<name>RL29_BACCN</name>
<protein>
    <recommendedName>
        <fullName evidence="1">Large ribosomal subunit protein uL29</fullName>
    </recommendedName>
    <alternativeName>
        <fullName evidence="2">50S ribosomal protein L29</fullName>
    </alternativeName>
</protein>
<feature type="chain" id="PRO_1000079873" description="Large ribosomal subunit protein uL29">
    <location>
        <begin position="1"/>
        <end position="66"/>
    </location>
</feature>
<keyword id="KW-0687">Ribonucleoprotein</keyword>
<keyword id="KW-0689">Ribosomal protein</keyword>
<accession>A7GK28</accession>
<organism>
    <name type="scientific">Bacillus cytotoxicus (strain DSM 22905 / CIP 110041 / 391-98 / NVH 391-98)</name>
    <dbReference type="NCBI Taxonomy" id="315749"/>
    <lineage>
        <taxon>Bacteria</taxon>
        <taxon>Bacillati</taxon>
        <taxon>Bacillota</taxon>
        <taxon>Bacilli</taxon>
        <taxon>Bacillales</taxon>
        <taxon>Bacillaceae</taxon>
        <taxon>Bacillus</taxon>
        <taxon>Bacillus cereus group</taxon>
    </lineage>
</organism>
<proteinExistence type="inferred from homology"/>
<reference key="1">
    <citation type="journal article" date="2008" name="Chem. Biol. Interact.">
        <title>Extending the Bacillus cereus group genomics to putative food-borne pathogens of different toxicity.</title>
        <authorList>
            <person name="Lapidus A."/>
            <person name="Goltsman E."/>
            <person name="Auger S."/>
            <person name="Galleron N."/>
            <person name="Segurens B."/>
            <person name="Dossat C."/>
            <person name="Land M.L."/>
            <person name="Broussolle V."/>
            <person name="Brillard J."/>
            <person name="Guinebretiere M.-H."/>
            <person name="Sanchis V."/>
            <person name="Nguen-the C."/>
            <person name="Lereclus D."/>
            <person name="Richardson P."/>
            <person name="Wincker P."/>
            <person name="Weissenbach J."/>
            <person name="Ehrlich S.D."/>
            <person name="Sorokin A."/>
        </authorList>
    </citation>
    <scope>NUCLEOTIDE SEQUENCE [LARGE SCALE GENOMIC DNA]</scope>
    <source>
        <strain>DSM 22905 / CIP 110041 / 391-98 / NVH 391-98</strain>
    </source>
</reference>
<comment type="similarity">
    <text evidence="1">Belongs to the universal ribosomal protein uL29 family.</text>
</comment>